<reference key="1">
    <citation type="journal article" date="2000" name="Nature">
        <title>Sequence and analysis of chromosome 1 of the plant Arabidopsis thaliana.</title>
        <authorList>
            <person name="Theologis A."/>
            <person name="Ecker J.R."/>
            <person name="Palm C.J."/>
            <person name="Federspiel N.A."/>
            <person name="Kaul S."/>
            <person name="White O."/>
            <person name="Alonso J."/>
            <person name="Altafi H."/>
            <person name="Araujo R."/>
            <person name="Bowman C.L."/>
            <person name="Brooks S.Y."/>
            <person name="Buehler E."/>
            <person name="Chan A."/>
            <person name="Chao Q."/>
            <person name="Chen H."/>
            <person name="Cheuk R.F."/>
            <person name="Chin C.W."/>
            <person name="Chung M.K."/>
            <person name="Conn L."/>
            <person name="Conway A.B."/>
            <person name="Conway A.R."/>
            <person name="Creasy T.H."/>
            <person name="Dewar K."/>
            <person name="Dunn P."/>
            <person name="Etgu P."/>
            <person name="Feldblyum T.V."/>
            <person name="Feng J.-D."/>
            <person name="Fong B."/>
            <person name="Fujii C.Y."/>
            <person name="Gill J.E."/>
            <person name="Goldsmith A.D."/>
            <person name="Haas B."/>
            <person name="Hansen N.F."/>
            <person name="Hughes B."/>
            <person name="Huizar L."/>
            <person name="Hunter J.L."/>
            <person name="Jenkins J."/>
            <person name="Johnson-Hopson C."/>
            <person name="Khan S."/>
            <person name="Khaykin E."/>
            <person name="Kim C.J."/>
            <person name="Koo H.L."/>
            <person name="Kremenetskaia I."/>
            <person name="Kurtz D.B."/>
            <person name="Kwan A."/>
            <person name="Lam B."/>
            <person name="Langin-Hooper S."/>
            <person name="Lee A."/>
            <person name="Lee J.M."/>
            <person name="Lenz C.A."/>
            <person name="Li J.H."/>
            <person name="Li Y.-P."/>
            <person name="Lin X."/>
            <person name="Liu S.X."/>
            <person name="Liu Z.A."/>
            <person name="Luros J.S."/>
            <person name="Maiti R."/>
            <person name="Marziali A."/>
            <person name="Militscher J."/>
            <person name="Miranda M."/>
            <person name="Nguyen M."/>
            <person name="Nierman W.C."/>
            <person name="Osborne B.I."/>
            <person name="Pai G."/>
            <person name="Peterson J."/>
            <person name="Pham P.K."/>
            <person name="Rizzo M."/>
            <person name="Rooney T."/>
            <person name="Rowley D."/>
            <person name="Sakano H."/>
            <person name="Salzberg S.L."/>
            <person name="Schwartz J.R."/>
            <person name="Shinn P."/>
            <person name="Southwick A.M."/>
            <person name="Sun H."/>
            <person name="Tallon L.J."/>
            <person name="Tambunga G."/>
            <person name="Toriumi M.J."/>
            <person name="Town C.D."/>
            <person name="Utterback T."/>
            <person name="Van Aken S."/>
            <person name="Vaysberg M."/>
            <person name="Vysotskaia V.S."/>
            <person name="Walker M."/>
            <person name="Wu D."/>
            <person name="Yu G."/>
            <person name="Fraser C.M."/>
            <person name="Venter J.C."/>
            <person name="Davis R.W."/>
        </authorList>
    </citation>
    <scope>NUCLEOTIDE SEQUENCE [LARGE SCALE GENOMIC DNA]</scope>
    <source>
        <strain>cv. Columbia</strain>
    </source>
</reference>
<reference key="2">
    <citation type="journal article" date="2017" name="Plant J.">
        <title>Araport11: a complete reannotation of the Arabidopsis thaliana reference genome.</title>
        <authorList>
            <person name="Cheng C.Y."/>
            <person name="Krishnakumar V."/>
            <person name="Chan A.P."/>
            <person name="Thibaud-Nissen F."/>
            <person name="Schobel S."/>
            <person name="Town C.D."/>
        </authorList>
    </citation>
    <scope>GENOME REANNOTATION</scope>
    <source>
        <strain>cv. Columbia</strain>
    </source>
</reference>
<feature type="chain" id="PRO_0000283134" description="Putative FBD-associated F-box protein At1g50980">
    <location>
        <begin position="1"/>
        <end position="370"/>
    </location>
</feature>
<feature type="domain" description="F-box" evidence="1">
    <location>
        <begin position="31"/>
        <end position="77"/>
    </location>
</feature>
<feature type="domain" description="FBD">
    <location>
        <begin position="292"/>
        <end position="343"/>
    </location>
</feature>
<name>FBD1_ARATH</name>
<proteinExistence type="predicted"/>
<protein>
    <recommendedName>
        <fullName>Putative FBD-associated F-box protein At1g50980</fullName>
    </recommendedName>
</protein>
<keyword id="KW-1185">Reference proteome</keyword>
<evidence type="ECO:0000255" key="1">
    <source>
        <dbReference type="PROSITE-ProRule" id="PRU00080"/>
    </source>
</evidence>
<organism>
    <name type="scientific">Arabidopsis thaliana</name>
    <name type="common">Mouse-ear cress</name>
    <dbReference type="NCBI Taxonomy" id="3702"/>
    <lineage>
        <taxon>Eukaryota</taxon>
        <taxon>Viridiplantae</taxon>
        <taxon>Streptophyta</taxon>
        <taxon>Embryophyta</taxon>
        <taxon>Tracheophyta</taxon>
        <taxon>Spermatophyta</taxon>
        <taxon>Magnoliopsida</taxon>
        <taxon>eudicotyledons</taxon>
        <taxon>Gunneridae</taxon>
        <taxon>Pentapetalae</taxon>
        <taxon>rosids</taxon>
        <taxon>malvids</taxon>
        <taxon>Brassicales</taxon>
        <taxon>Brassicaceae</taxon>
        <taxon>Camelineae</taxon>
        <taxon>Arabidopsis</taxon>
    </lineage>
</organism>
<accession>Q9C6I2</accession>
<dbReference type="EMBL" id="AC079284">
    <property type="protein sequence ID" value="AAG50926.1"/>
    <property type="molecule type" value="Genomic_DNA"/>
</dbReference>
<dbReference type="EMBL" id="CP002684">
    <property type="protein sequence ID" value="AEE32608.1"/>
    <property type="molecule type" value="Genomic_DNA"/>
</dbReference>
<dbReference type="PIR" id="A96547">
    <property type="entry name" value="A96547"/>
</dbReference>
<dbReference type="RefSeq" id="NP_175511.1">
    <property type="nucleotide sequence ID" value="NM_103978.1"/>
</dbReference>
<dbReference type="SMR" id="Q9C6I2"/>
<dbReference type="iPTMnet" id="Q9C6I2"/>
<dbReference type="PaxDb" id="3702-AT1G50980.1"/>
<dbReference type="EnsemblPlants" id="AT1G50980.1">
    <property type="protein sequence ID" value="AT1G50980.1"/>
    <property type="gene ID" value="AT1G50980"/>
</dbReference>
<dbReference type="GeneID" id="841520"/>
<dbReference type="Gramene" id="AT1G50980.1">
    <property type="protein sequence ID" value="AT1G50980.1"/>
    <property type="gene ID" value="AT1G50980"/>
</dbReference>
<dbReference type="KEGG" id="ath:AT1G50980"/>
<dbReference type="Araport" id="AT1G50980"/>
<dbReference type="TAIR" id="AT1G50980"/>
<dbReference type="HOGENOM" id="CLU_010721_1_2_1"/>
<dbReference type="InParanoid" id="Q9C6I2"/>
<dbReference type="OMA" id="LRIEMIC"/>
<dbReference type="PhylomeDB" id="Q9C6I2"/>
<dbReference type="PRO" id="PR:Q9C6I2"/>
<dbReference type="Proteomes" id="UP000006548">
    <property type="component" value="Chromosome 1"/>
</dbReference>
<dbReference type="ExpressionAtlas" id="Q9C6I2">
    <property type="expression patterns" value="baseline and differential"/>
</dbReference>
<dbReference type="CDD" id="cd22160">
    <property type="entry name" value="F-box_AtFBL13-like"/>
    <property type="match status" value="1"/>
</dbReference>
<dbReference type="FunFam" id="1.20.1280.50:FF:000155">
    <property type="entry name" value="FBD-associated F-box protein At3g49020"/>
    <property type="match status" value="1"/>
</dbReference>
<dbReference type="Gene3D" id="1.20.1280.50">
    <property type="match status" value="1"/>
</dbReference>
<dbReference type="Gene3D" id="3.80.10.10">
    <property type="entry name" value="Ribonuclease Inhibitor"/>
    <property type="match status" value="1"/>
</dbReference>
<dbReference type="InterPro" id="IPR036047">
    <property type="entry name" value="F-box-like_dom_sf"/>
</dbReference>
<dbReference type="InterPro" id="IPR053781">
    <property type="entry name" value="F-box_AtFBL13-like"/>
</dbReference>
<dbReference type="InterPro" id="IPR001810">
    <property type="entry name" value="F-box_dom"/>
</dbReference>
<dbReference type="InterPro" id="IPR006566">
    <property type="entry name" value="FBD"/>
</dbReference>
<dbReference type="InterPro" id="IPR050232">
    <property type="entry name" value="FBL13/AtMIF1-like"/>
</dbReference>
<dbReference type="InterPro" id="IPR032675">
    <property type="entry name" value="LRR_dom_sf"/>
</dbReference>
<dbReference type="PANTHER" id="PTHR31900:SF34">
    <property type="entry name" value="EMB|CAB62440.1-RELATED"/>
    <property type="match status" value="1"/>
</dbReference>
<dbReference type="PANTHER" id="PTHR31900">
    <property type="entry name" value="F-BOX/RNI SUPERFAMILY PROTEIN-RELATED"/>
    <property type="match status" value="1"/>
</dbReference>
<dbReference type="Pfam" id="PF00646">
    <property type="entry name" value="F-box"/>
    <property type="match status" value="1"/>
</dbReference>
<dbReference type="Pfam" id="PF08387">
    <property type="entry name" value="FBD"/>
    <property type="match status" value="1"/>
</dbReference>
<dbReference type="SMART" id="SM00579">
    <property type="entry name" value="FBD"/>
    <property type="match status" value="1"/>
</dbReference>
<dbReference type="SMART" id="SM00256">
    <property type="entry name" value="FBOX"/>
    <property type="match status" value="1"/>
</dbReference>
<dbReference type="SUPFAM" id="SSF81383">
    <property type="entry name" value="F-box domain"/>
    <property type="match status" value="1"/>
</dbReference>
<dbReference type="SUPFAM" id="SSF52047">
    <property type="entry name" value="RNI-like"/>
    <property type="match status" value="1"/>
</dbReference>
<dbReference type="PROSITE" id="PS50181">
    <property type="entry name" value="FBOX"/>
    <property type="match status" value="1"/>
</dbReference>
<gene>
    <name type="ordered locus">At1g50980</name>
    <name type="ORF">F8A12.20</name>
</gene>
<sequence>MANKNFSLTVYDSEYMETNNKIYQENMEKKIRTISEFPDKVLLKILSLLPSKDVVATGVLSKRWRSLWKDVKTFRTSSVESLQLKINPSATNKDIQSLVNMAVARSMRELRIEMICKNFELPKSFYMFSQLETVILDKVSLMDPPPDVHLPCLKRLHLLSVNSLTNVMIFTIDVPTLRILSIDNTSGKSRPKGVHGFVINTPSLSVNVVFDNPYKFLAPLGSTQYLSLCSVTSHTTYRPAVFSFIFLDHLELCLCSAEQWNLLTRILNYAPRLRVLQLKLYHKHCVKDTKNLMGNQPDLIPKSLSSHLEILEWRQYNDTAQEREAAKYILANASGLRKATFYTESTEKHGMLKEVRMCGQRFKNMSACVK</sequence>